<proteinExistence type="evidence at protein level"/>
<reference key="1">
    <citation type="journal article" date="2012" name="Proc. Natl. Acad. Sci. U.S.A.">
        <title>Nonseed plant Selaginella moellendorfii has both seed plant and microbial types of terpene synthases.</title>
        <authorList>
            <person name="Li G."/>
            <person name="Kollner T.G."/>
            <person name="Yin Y."/>
            <person name="Jiang Y."/>
            <person name="Chen H."/>
            <person name="Xu Y."/>
            <person name="Gershenzon J."/>
            <person name="Pichersky E."/>
            <person name="Chen F."/>
        </authorList>
    </citation>
    <scope>NUCLEOTIDE SEQUENCE [MRNA]</scope>
    <scope>FUNCTION</scope>
    <scope>CATALYTIC ACTIVITY</scope>
    <scope>GENE FAMILY</scope>
    <scope>NOMENCLATURE</scope>
</reference>
<reference key="2">
    <citation type="journal article" date="2011" name="Science">
        <title>The Selaginella genome identifies genetic changes associated with the evolution of vascular plants.</title>
        <authorList>
            <person name="Banks J.A."/>
            <person name="Nishiyama T."/>
            <person name="Hasebe M."/>
            <person name="Bowman J.L."/>
            <person name="Gribskov M."/>
            <person name="dePamphilis C."/>
            <person name="Albert V.A."/>
            <person name="Aono N."/>
            <person name="Aoyama T."/>
            <person name="Ambrose B.A."/>
            <person name="Ashton N.W."/>
            <person name="Axtell M.J."/>
            <person name="Barker E."/>
            <person name="Barker M.S."/>
            <person name="Bennetzen J.L."/>
            <person name="Bonawitz N.D."/>
            <person name="Chapple C."/>
            <person name="Cheng C."/>
            <person name="Correa L.G."/>
            <person name="Dacre M."/>
            <person name="DeBarry J."/>
            <person name="Dreyer I."/>
            <person name="Elias M."/>
            <person name="Engstrom E.M."/>
            <person name="Estelle M."/>
            <person name="Feng L."/>
            <person name="Finet C."/>
            <person name="Floyd S.K."/>
            <person name="Frommer W.B."/>
            <person name="Fujita T."/>
            <person name="Gramzow L."/>
            <person name="Gutensohn M."/>
            <person name="Harholt J."/>
            <person name="Hattori M."/>
            <person name="Heyl A."/>
            <person name="Hirai T."/>
            <person name="Hiwatashi Y."/>
            <person name="Ishikawa M."/>
            <person name="Iwata M."/>
            <person name="Karol K.G."/>
            <person name="Koehler B."/>
            <person name="Kolukisaoglu U."/>
            <person name="Kubo M."/>
            <person name="Kurata T."/>
            <person name="Lalonde S."/>
            <person name="Li K."/>
            <person name="Li Y."/>
            <person name="Litt A."/>
            <person name="Lyons E."/>
            <person name="Manning G."/>
            <person name="Maruyama T."/>
            <person name="Michael T.P."/>
            <person name="Mikami K."/>
            <person name="Miyazaki S."/>
            <person name="Morinaga S."/>
            <person name="Murata T."/>
            <person name="Mueller-Roeber B."/>
            <person name="Nelson D.R."/>
            <person name="Obara M."/>
            <person name="Oguri Y."/>
            <person name="Olmstead R.G."/>
            <person name="Onodera N."/>
            <person name="Petersen B.L."/>
            <person name="Pils B."/>
            <person name="Prigge M."/>
            <person name="Rensing S.A."/>
            <person name="Riano-Pachon D.M."/>
            <person name="Roberts A.W."/>
            <person name="Sato Y."/>
            <person name="Scheller H.V."/>
            <person name="Schulz B."/>
            <person name="Schulz C."/>
            <person name="Shakirov E.V."/>
            <person name="Shibagaki N."/>
            <person name="Shinohara N."/>
            <person name="Shippen D.E."/>
            <person name="Soerensen I."/>
            <person name="Sotooka R."/>
            <person name="Sugimoto N."/>
            <person name="Sugita M."/>
            <person name="Sumikawa N."/>
            <person name="Tanurdzic M."/>
            <person name="Theissen G."/>
            <person name="Ulvskov P."/>
            <person name="Wakazuki S."/>
            <person name="Weng J.K."/>
            <person name="Willats W.W."/>
            <person name="Wipf D."/>
            <person name="Wolf P.G."/>
            <person name="Yang L."/>
            <person name="Zimmer A.D."/>
            <person name="Zhu Q."/>
            <person name="Mitros T."/>
            <person name="Hellsten U."/>
            <person name="Loque D."/>
            <person name="Otillar R."/>
            <person name="Salamov A."/>
            <person name="Schmutz J."/>
            <person name="Shapiro H."/>
            <person name="Lindquist E."/>
            <person name="Lucas S."/>
            <person name="Rokhsar D."/>
            <person name="Grigoriev I.V."/>
        </authorList>
    </citation>
    <scope>NUCLEOTIDE SEQUENCE [LARGE SCALE GENOMIC DNA]</scope>
</reference>
<evidence type="ECO:0000250" key="1"/>
<evidence type="ECO:0000250" key="2">
    <source>
        <dbReference type="UniProtKB" id="C7BKP9"/>
    </source>
</evidence>
<evidence type="ECO:0000250" key="3">
    <source>
        <dbReference type="UniProtKB" id="Q38802"/>
    </source>
</evidence>
<evidence type="ECO:0000269" key="4">
    <source>
    </source>
</evidence>
<evidence type="ECO:0000305" key="5"/>
<dbReference type="EC" id="5.5.1.12"/>
<dbReference type="EMBL" id="JX413782">
    <property type="protein sequence ID" value="AFR34002.1"/>
    <property type="molecule type" value="mRNA"/>
</dbReference>
<dbReference type="EMBL" id="GL377565">
    <property type="protein sequence ID" value="EFJ37889.1"/>
    <property type="status" value="ALT_INIT"/>
    <property type="molecule type" value="Genomic_DNA"/>
</dbReference>
<dbReference type="RefSeq" id="XP_002960350.1">
    <property type="nucleotide sequence ID" value="XM_002960304.1"/>
</dbReference>
<dbReference type="SMR" id="J9QS23"/>
<dbReference type="FunCoup" id="J9QS23">
    <property type="interactions" value="37"/>
</dbReference>
<dbReference type="STRING" id="88036.J9QS23"/>
<dbReference type="GeneID" id="9655852"/>
<dbReference type="KEGG" id="smo:SELMODRAFT_402532"/>
<dbReference type="eggNOG" id="ENOG502QQN6">
    <property type="taxonomic scope" value="Eukaryota"/>
</dbReference>
<dbReference type="HOGENOM" id="CLU_003125_2_0_1"/>
<dbReference type="InParanoid" id="J9QS23"/>
<dbReference type="OrthoDB" id="2343925at2759"/>
<dbReference type="UniPathway" id="UPA00213"/>
<dbReference type="Proteomes" id="UP000001514">
    <property type="component" value="Unassembled WGS sequence"/>
</dbReference>
<dbReference type="GO" id="GO:0050559">
    <property type="term" value="F:copalyl diphosphate synthase activity"/>
    <property type="evidence" value="ECO:0007669"/>
    <property type="project" value="UniProtKB-EC"/>
</dbReference>
<dbReference type="GO" id="GO:0000287">
    <property type="term" value="F:magnesium ion binding"/>
    <property type="evidence" value="ECO:0000318"/>
    <property type="project" value="GO_Central"/>
</dbReference>
<dbReference type="GO" id="GO:0010333">
    <property type="term" value="F:terpene synthase activity"/>
    <property type="evidence" value="ECO:0000318"/>
    <property type="project" value="GO_Central"/>
</dbReference>
<dbReference type="GO" id="GO:0016102">
    <property type="term" value="P:diterpenoid biosynthetic process"/>
    <property type="evidence" value="ECO:0000318"/>
    <property type="project" value="GO_Central"/>
</dbReference>
<dbReference type="CDD" id="cd00684">
    <property type="entry name" value="Terpene_cyclase_plant_C1"/>
    <property type="match status" value="1"/>
</dbReference>
<dbReference type="FunFam" id="1.50.10.130:FF:000002">
    <property type="entry name" value="Ent-copalyl diphosphate synthase, chloroplastic"/>
    <property type="match status" value="1"/>
</dbReference>
<dbReference type="Gene3D" id="1.50.10.160">
    <property type="match status" value="1"/>
</dbReference>
<dbReference type="Gene3D" id="1.10.600.10">
    <property type="entry name" value="Farnesyl Diphosphate Synthase"/>
    <property type="match status" value="1"/>
</dbReference>
<dbReference type="Gene3D" id="1.50.10.130">
    <property type="entry name" value="Terpene synthase, N-terminal domain"/>
    <property type="match status" value="1"/>
</dbReference>
<dbReference type="InterPro" id="IPR008949">
    <property type="entry name" value="Isoprenoid_synthase_dom_sf"/>
</dbReference>
<dbReference type="InterPro" id="IPR044814">
    <property type="entry name" value="Terpene_cyclase_plant_C1"/>
</dbReference>
<dbReference type="InterPro" id="IPR001906">
    <property type="entry name" value="Terpene_synth_N"/>
</dbReference>
<dbReference type="InterPro" id="IPR036965">
    <property type="entry name" value="Terpene_synth_N_sf"/>
</dbReference>
<dbReference type="InterPro" id="IPR050148">
    <property type="entry name" value="Terpene_synthase-like"/>
</dbReference>
<dbReference type="InterPro" id="IPR005630">
    <property type="entry name" value="Terpene_synthase_metal-bd"/>
</dbReference>
<dbReference type="InterPro" id="IPR008930">
    <property type="entry name" value="Terpenoid_cyclase/PrenylTrfase"/>
</dbReference>
<dbReference type="PANTHER" id="PTHR31739">
    <property type="entry name" value="ENT-COPALYL DIPHOSPHATE SYNTHASE, CHLOROPLASTIC"/>
    <property type="match status" value="1"/>
</dbReference>
<dbReference type="PANTHER" id="PTHR31739:SF4">
    <property type="entry name" value="ENT-COPALYL DIPHOSPHATE SYNTHASE, CHLOROPLASTIC"/>
    <property type="match status" value="1"/>
</dbReference>
<dbReference type="Pfam" id="PF01397">
    <property type="entry name" value="Terpene_synth"/>
    <property type="match status" value="1"/>
</dbReference>
<dbReference type="Pfam" id="PF03936">
    <property type="entry name" value="Terpene_synth_C"/>
    <property type="match status" value="1"/>
</dbReference>
<dbReference type="SFLD" id="SFLDG01014">
    <property type="entry name" value="Terpene_Cyclase_Like_1_N-term"/>
    <property type="match status" value="1"/>
</dbReference>
<dbReference type="SFLD" id="SFLDG01605">
    <property type="entry name" value="Terpene_Cyclase_Like_1_N-term"/>
    <property type="match status" value="1"/>
</dbReference>
<dbReference type="SUPFAM" id="SSF48239">
    <property type="entry name" value="Terpenoid cyclases/Protein prenyltransferases"/>
    <property type="match status" value="2"/>
</dbReference>
<dbReference type="SUPFAM" id="SSF48576">
    <property type="entry name" value="Terpenoid synthases"/>
    <property type="match status" value="1"/>
</dbReference>
<gene>
    <name type="primary">CPS1</name>
    <name type="ORF">SELMODRAFT_402532</name>
</gene>
<name>TPS9_SELML</name>
<sequence>MWELVETVRSMLNSLHDGEISVSAYDTAWVARVPALDGSNTPQFPMCLNWIMNNQLEDGSWGDRDLFLTYDRICSALACAIALKTWNTGDKIVHKALEFIRKTMPKMELEDSTHMPIGFEIVFPAMIEEAMALELDIDYTAPVLQTIYAERKKKLERIPMNVVQNYPTTLLHSLEGLHKTIDWDKVIKLQSPDGSLLFSPASTACALMHTGNEKCLQYLNNLVKRFNCAVPNVYPVDLFEHLWIVDRLQRLGISRYFTQEIKSALDYVYRYWTDKGIAWARGSPVQDADDTSMAFRLLRSHGYDISPDAFKTFQEGDSFVCFSGQAGQAVTGMYNLYRASQVMFPGETILEEAGSFARKFLEGKRQENQLYDKWIISKDLPGEVEFALDNPMHARLERLATRRYIDQYAADDVWIGKSLYRMPFVNNPIFLELAKADFNMCRALHRKEFQQLERWYDESSLSMFKGFSRSKLEQTFYSAAATIFEPELSPARLIWSQCWFLSLGINEYFDYQGSTKELEDLINNVERWNVNSLGNCSAKVKILFVELYNIVQNHSKQGFLYQGRSIGGALREIWKTWLSSLLQRTKWKMSDNYPTLEEYLKASHSSIEPAVRSTVYFVGETLATGDLKDSAICQMMNTASRLVQDTHTDKVDSSLNSITIYLEENPQLTESEALSQVQALANKNMQKLLYETLQPGALPQACKQLFLNAARIMNVFPGTNKVQAKLSNHVKRVLSQPVL</sequence>
<protein>
    <recommendedName>
        <fullName>Copalyl diphosphate synthase 1</fullName>
        <ecNumber>5.5.1.12</ecNumber>
    </recommendedName>
    <alternativeName>
        <fullName>Terpene synthase 9</fullName>
        <shortName>SmTPS9</shortName>
    </alternativeName>
</protein>
<feature type="chain" id="PRO_0000421938" description="Copalyl diphosphate synthase 1">
    <location>
        <begin position="1"/>
        <end position="739"/>
    </location>
</feature>
<feature type="short sequence motif" description="DXDD motif">
    <location>
        <begin position="287"/>
        <end position="290"/>
    </location>
</feature>
<feature type="binding site" evidence="3">
    <location>
        <position position="154"/>
    </location>
    <ligand>
        <name>substrate</name>
    </ligand>
</feature>
<feature type="binding site" evidence="2">
    <location>
        <position position="287"/>
    </location>
    <ligand>
        <name>Mg(2+)</name>
        <dbReference type="ChEBI" id="CHEBI:18420"/>
    </ligand>
</feature>
<feature type="binding site" evidence="2">
    <location>
        <position position="289"/>
    </location>
    <ligand>
        <name>Mg(2+)</name>
        <dbReference type="ChEBI" id="CHEBI:18420"/>
    </ligand>
</feature>
<feature type="binding site" evidence="3">
    <location>
        <position position="373"/>
    </location>
    <ligand>
        <name>substrate</name>
    </ligand>
</feature>
<comment type="function">
    <text evidence="4">Monofunctional diterpene synthase converting geranylgeranyl diphosphate to copalyl diphosphate.</text>
</comment>
<comment type="catalytic activity">
    <reaction evidence="4">
        <text>(2E,6E,10E)-geranylgeranyl diphosphate = (+)-copalyl diphosphate</text>
        <dbReference type="Rhea" id="RHEA:24316"/>
        <dbReference type="ChEBI" id="CHEBI:58635"/>
        <dbReference type="ChEBI" id="CHEBI:58756"/>
        <dbReference type="EC" id="5.5.1.12"/>
    </reaction>
</comment>
<comment type="cofactor">
    <cofactor evidence="1">
        <name>Mg(2+)</name>
        <dbReference type="ChEBI" id="CHEBI:18420"/>
    </cofactor>
</comment>
<comment type="pathway">
    <text>Secondary metabolite biosynthesis; terpenoid biosynthesis.</text>
</comment>
<comment type="domain">
    <text evidence="1">The Asp-Xaa-Asp-Asp (DXDD) motif is important for the catalytic activity, presumably through binding to Mg(2+).</text>
</comment>
<comment type="miscellaneous">
    <text>S.moellendorffii contains two distinct types of functional terpene synthases (TPS) genes, the typical seed plants TPS genes (SmTPSs) and the microbial type TPS genes (SmMTPSLs).</text>
</comment>
<comment type="similarity">
    <text evidence="5">Belongs to the terpene synthase family.</text>
</comment>
<comment type="sequence caution" evidence="5">
    <conflict type="erroneous initiation">
        <sequence resource="EMBL-CDS" id="EFJ37889"/>
    </conflict>
    <text>Truncated N-terminus.</text>
</comment>
<accession>J9QS23</accession>
<accession>D8QQZ1</accession>
<organism>
    <name type="scientific">Selaginella moellendorffii</name>
    <name type="common">Spikemoss</name>
    <dbReference type="NCBI Taxonomy" id="88036"/>
    <lineage>
        <taxon>Eukaryota</taxon>
        <taxon>Viridiplantae</taxon>
        <taxon>Streptophyta</taxon>
        <taxon>Embryophyta</taxon>
        <taxon>Tracheophyta</taxon>
        <taxon>Lycopodiopsida</taxon>
        <taxon>Selaginellales</taxon>
        <taxon>Selaginellaceae</taxon>
        <taxon>Selaginella</taxon>
    </lineage>
</organism>
<keyword id="KW-0413">Isomerase</keyword>
<keyword id="KW-0460">Magnesium</keyword>
<keyword id="KW-0479">Metal-binding</keyword>
<keyword id="KW-1185">Reference proteome</keyword>